<feature type="transit peptide" description="Mitochondrion" evidence="1">
    <location>
        <begin position="1"/>
        <end position="66"/>
    </location>
</feature>
<feature type="chain" id="PRO_0000002568" description="ATP synthase F(0) complex subunit C3, mitochondrial">
    <location>
        <begin position="67"/>
        <end position="141"/>
    </location>
</feature>
<feature type="transmembrane region" description="Helical" evidence="3">
    <location>
        <begin position="82"/>
        <end position="102"/>
    </location>
</feature>
<feature type="transmembrane region" description="Helical" evidence="3">
    <location>
        <begin position="117"/>
        <end position="137"/>
    </location>
</feature>
<feature type="site" description="Reversibly protonated during proton transport" evidence="1">
    <location>
        <position position="124"/>
    </location>
</feature>
<feature type="modified residue" description="N6,N6,N6-trimethyllysine" evidence="4">
    <location>
        <position position="109"/>
    </location>
</feature>
<organism>
    <name type="scientific">Mus musculus</name>
    <name type="common">Mouse</name>
    <dbReference type="NCBI Taxonomy" id="10090"/>
    <lineage>
        <taxon>Eukaryota</taxon>
        <taxon>Metazoa</taxon>
        <taxon>Chordata</taxon>
        <taxon>Craniata</taxon>
        <taxon>Vertebrata</taxon>
        <taxon>Euteleostomi</taxon>
        <taxon>Mammalia</taxon>
        <taxon>Eutheria</taxon>
        <taxon>Euarchontoglires</taxon>
        <taxon>Glires</taxon>
        <taxon>Rodentia</taxon>
        <taxon>Myomorpha</taxon>
        <taxon>Muroidea</taxon>
        <taxon>Muridae</taxon>
        <taxon>Murinae</taxon>
        <taxon>Mus</taxon>
        <taxon>Mus</taxon>
    </lineage>
</organism>
<evidence type="ECO:0000250" key="1"/>
<evidence type="ECO:0000250" key="2">
    <source>
        <dbReference type="UniProtKB" id="P48201"/>
    </source>
</evidence>
<evidence type="ECO:0000255" key="3"/>
<evidence type="ECO:0000269" key="4">
    <source>
    </source>
</evidence>
<evidence type="ECO:0000305" key="5"/>
<sequence>MFACAKLARTPALIRAGSRVAYRPISASVLSRPETRTGEGSTVFNGAQNGVCQLIRREFQTSVISRDIDTAAKFIGAGAATVGVAGSGAGIGTVFGSLIIGYARNPSLKQQLFSYAILGFALSEAMGLFCLMVAFLILFAM</sequence>
<dbReference type="EMBL" id="AK077930">
    <property type="protein sequence ID" value="BAC37071.1"/>
    <property type="molecule type" value="mRNA"/>
</dbReference>
<dbReference type="EMBL" id="AK087955">
    <property type="protein sequence ID" value="BAC40056.1"/>
    <property type="molecule type" value="mRNA"/>
</dbReference>
<dbReference type="CCDS" id="CCDS16136.1"/>
<dbReference type="RefSeq" id="NP_001288650.1">
    <property type="nucleotide sequence ID" value="NM_001301721.1"/>
</dbReference>
<dbReference type="RefSeq" id="NP_778180.1">
    <property type="nucleotide sequence ID" value="NM_175015.3"/>
</dbReference>
<dbReference type="RefSeq" id="XP_030106038.1">
    <property type="nucleotide sequence ID" value="XM_030250178.2"/>
</dbReference>
<dbReference type="SMR" id="P56384"/>
<dbReference type="FunCoup" id="P56384">
    <property type="interactions" value="567"/>
</dbReference>
<dbReference type="STRING" id="10090.ENSMUSP00000107627"/>
<dbReference type="PhosphoSitePlus" id="P56384"/>
<dbReference type="jPOST" id="P56384"/>
<dbReference type="PaxDb" id="10090-ENSMUSP00000018914"/>
<dbReference type="ProteomicsDB" id="277126"/>
<dbReference type="Pumba" id="P56384"/>
<dbReference type="Antibodypedia" id="53295">
    <property type="antibodies" value="47 antibodies from 17 providers"/>
</dbReference>
<dbReference type="DNASU" id="228033"/>
<dbReference type="Ensembl" id="ENSMUST00000018914.3">
    <property type="protein sequence ID" value="ENSMUSP00000018914.3"/>
    <property type="gene ID" value="ENSMUSG00000018770.10"/>
</dbReference>
<dbReference type="Ensembl" id="ENSMUST00000111996.8">
    <property type="protein sequence ID" value="ENSMUSP00000107627.2"/>
    <property type="gene ID" value="ENSMUSG00000018770.10"/>
</dbReference>
<dbReference type="GeneID" id="228033"/>
<dbReference type="KEGG" id="mmu:228033"/>
<dbReference type="UCSC" id="uc008kdm.2">
    <property type="organism name" value="mouse"/>
</dbReference>
<dbReference type="AGR" id="MGI:2442035"/>
<dbReference type="CTD" id="518"/>
<dbReference type="MGI" id="MGI:2442035">
    <property type="gene designation" value="Atp5mc3"/>
</dbReference>
<dbReference type="VEuPathDB" id="HostDB:ENSMUSG00000018770"/>
<dbReference type="eggNOG" id="KOG3025">
    <property type="taxonomic scope" value="Eukaryota"/>
</dbReference>
<dbReference type="GeneTree" id="ENSGT00940000154298"/>
<dbReference type="HOGENOM" id="CLU_116822_1_0_1"/>
<dbReference type="InParanoid" id="P56384"/>
<dbReference type="OMA" id="PAKMFAC"/>
<dbReference type="OrthoDB" id="438052at2759"/>
<dbReference type="PhylomeDB" id="P56384"/>
<dbReference type="TreeFam" id="TF300140"/>
<dbReference type="Reactome" id="R-MMU-1268020">
    <property type="pathway name" value="Mitochondrial protein import"/>
</dbReference>
<dbReference type="Reactome" id="R-MMU-163210">
    <property type="pathway name" value="Formation of ATP by chemiosmotic coupling"/>
</dbReference>
<dbReference type="Reactome" id="R-MMU-8949613">
    <property type="pathway name" value="Cristae formation"/>
</dbReference>
<dbReference type="BioGRID-ORCS" id="228033">
    <property type="hits" value="3 hits in 77 CRISPR screens"/>
</dbReference>
<dbReference type="ChiTaRS" id="Atp5g3">
    <property type="organism name" value="mouse"/>
</dbReference>
<dbReference type="PRO" id="PR:P56384"/>
<dbReference type="Proteomes" id="UP000000589">
    <property type="component" value="Chromosome 2"/>
</dbReference>
<dbReference type="RNAct" id="P56384">
    <property type="molecule type" value="protein"/>
</dbReference>
<dbReference type="Bgee" id="ENSMUSG00000018770">
    <property type="expression patterns" value="Expressed in myocardium of ventricle and 255 other cell types or tissues"/>
</dbReference>
<dbReference type="ExpressionAtlas" id="P56384">
    <property type="expression patterns" value="baseline and differential"/>
</dbReference>
<dbReference type="GO" id="GO:0031966">
    <property type="term" value="C:mitochondrial membrane"/>
    <property type="evidence" value="ECO:0007669"/>
    <property type="project" value="UniProtKB-SubCell"/>
</dbReference>
<dbReference type="GO" id="GO:0005739">
    <property type="term" value="C:mitochondrion"/>
    <property type="evidence" value="ECO:0007005"/>
    <property type="project" value="MGI"/>
</dbReference>
<dbReference type="GO" id="GO:0045259">
    <property type="term" value="C:proton-transporting ATP synthase complex"/>
    <property type="evidence" value="ECO:0007669"/>
    <property type="project" value="UniProtKB-KW"/>
</dbReference>
<dbReference type="GO" id="GO:0033177">
    <property type="term" value="C:proton-transporting two-sector ATPase complex, proton-transporting domain"/>
    <property type="evidence" value="ECO:0007669"/>
    <property type="project" value="InterPro"/>
</dbReference>
<dbReference type="GO" id="GO:0008289">
    <property type="term" value="F:lipid binding"/>
    <property type="evidence" value="ECO:0007669"/>
    <property type="project" value="UniProtKB-KW"/>
</dbReference>
<dbReference type="GO" id="GO:0015078">
    <property type="term" value="F:proton transmembrane transporter activity"/>
    <property type="evidence" value="ECO:0007669"/>
    <property type="project" value="InterPro"/>
</dbReference>
<dbReference type="GO" id="GO:0015986">
    <property type="term" value="P:proton motive force-driven ATP synthesis"/>
    <property type="evidence" value="ECO:0007669"/>
    <property type="project" value="InterPro"/>
</dbReference>
<dbReference type="CDD" id="cd18182">
    <property type="entry name" value="ATP-synt_Fo_c_ATP5G3"/>
    <property type="match status" value="1"/>
</dbReference>
<dbReference type="FunFam" id="1.20.20.10:FF:000003">
    <property type="entry name" value="Atp synthase f complex subunit mitochondrial"/>
    <property type="match status" value="1"/>
</dbReference>
<dbReference type="Gene3D" id="1.20.20.10">
    <property type="entry name" value="F1F0 ATP synthase subunit C"/>
    <property type="match status" value="1"/>
</dbReference>
<dbReference type="HAMAP" id="MF_01396">
    <property type="entry name" value="ATP_synth_c_bact"/>
    <property type="match status" value="1"/>
</dbReference>
<dbReference type="InterPro" id="IPR000454">
    <property type="entry name" value="ATP_synth_F0_csu"/>
</dbReference>
<dbReference type="InterPro" id="IPR020537">
    <property type="entry name" value="ATP_synth_F0_csu_DDCD_BS"/>
</dbReference>
<dbReference type="InterPro" id="IPR038662">
    <property type="entry name" value="ATP_synth_F0_csu_sf"/>
</dbReference>
<dbReference type="InterPro" id="IPR002379">
    <property type="entry name" value="ATPase_proteolipid_c-like_dom"/>
</dbReference>
<dbReference type="InterPro" id="IPR035921">
    <property type="entry name" value="F/V-ATP_Csub_sf"/>
</dbReference>
<dbReference type="PANTHER" id="PTHR10031:SF56">
    <property type="entry name" value="ATP SYNTHASE F(0) COMPLEX SUBUNIT C1, MITOCHONDRIAL"/>
    <property type="match status" value="1"/>
</dbReference>
<dbReference type="PANTHER" id="PTHR10031">
    <property type="entry name" value="ATP SYNTHASE LIPID-BINDING PROTEIN, MITOCHONDRIAL"/>
    <property type="match status" value="1"/>
</dbReference>
<dbReference type="Pfam" id="PF00137">
    <property type="entry name" value="ATP-synt_C"/>
    <property type="match status" value="1"/>
</dbReference>
<dbReference type="PRINTS" id="PR00124">
    <property type="entry name" value="ATPASEC"/>
</dbReference>
<dbReference type="SUPFAM" id="SSF81333">
    <property type="entry name" value="F1F0 ATP synthase subunit C"/>
    <property type="match status" value="1"/>
</dbReference>
<dbReference type="PROSITE" id="PS00605">
    <property type="entry name" value="ATPASE_C"/>
    <property type="match status" value="1"/>
</dbReference>
<proteinExistence type="evidence at protein level"/>
<name>AT5G3_MOUSE</name>
<reference key="1">
    <citation type="journal article" date="2005" name="Science">
        <title>The transcriptional landscape of the mammalian genome.</title>
        <authorList>
            <person name="Carninci P."/>
            <person name="Kasukawa T."/>
            <person name="Katayama S."/>
            <person name="Gough J."/>
            <person name="Frith M.C."/>
            <person name="Maeda N."/>
            <person name="Oyama R."/>
            <person name="Ravasi T."/>
            <person name="Lenhard B."/>
            <person name="Wells C."/>
            <person name="Kodzius R."/>
            <person name="Shimokawa K."/>
            <person name="Bajic V.B."/>
            <person name="Brenner S.E."/>
            <person name="Batalov S."/>
            <person name="Forrest A.R."/>
            <person name="Zavolan M."/>
            <person name="Davis M.J."/>
            <person name="Wilming L.G."/>
            <person name="Aidinis V."/>
            <person name="Allen J.E."/>
            <person name="Ambesi-Impiombato A."/>
            <person name="Apweiler R."/>
            <person name="Aturaliya R.N."/>
            <person name="Bailey T.L."/>
            <person name="Bansal M."/>
            <person name="Baxter L."/>
            <person name="Beisel K.W."/>
            <person name="Bersano T."/>
            <person name="Bono H."/>
            <person name="Chalk A.M."/>
            <person name="Chiu K.P."/>
            <person name="Choudhary V."/>
            <person name="Christoffels A."/>
            <person name="Clutterbuck D.R."/>
            <person name="Crowe M.L."/>
            <person name="Dalla E."/>
            <person name="Dalrymple B.P."/>
            <person name="de Bono B."/>
            <person name="Della Gatta G."/>
            <person name="di Bernardo D."/>
            <person name="Down T."/>
            <person name="Engstrom P."/>
            <person name="Fagiolini M."/>
            <person name="Faulkner G."/>
            <person name="Fletcher C.F."/>
            <person name="Fukushima T."/>
            <person name="Furuno M."/>
            <person name="Futaki S."/>
            <person name="Gariboldi M."/>
            <person name="Georgii-Hemming P."/>
            <person name="Gingeras T.R."/>
            <person name="Gojobori T."/>
            <person name="Green R.E."/>
            <person name="Gustincich S."/>
            <person name="Harbers M."/>
            <person name="Hayashi Y."/>
            <person name="Hensch T.K."/>
            <person name="Hirokawa N."/>
            <person name="Hill D."/>
            <person name="Huminiecki L."/>
            <person name="Iacono M."/>
            <person name="Ikeo K."/>
            <person name="Iwama A."/>
            <person name="Ishikawa T."/>
            <person name="Jakt M."/>
            <person name="Kanapin A."/>
            <person name="Katoh M."/>
            <person name="Kawasawa Y."/>
            <person name="Kelso J."/>
            <person name="Kitamura H."/>
            <person name="Kitano H."/>
            <person name="Kollias G."/>
            <person name="Krishnan S.P."/>
            <person name="Kruger A."/>
            <person name="Kummerfeld S.K."/>
            <person name="Kurochkin I.V."/>
            <person name="Lareau L.F."/>
            <person name="Lazarevic D."/>
            <person name="Lipovich L."/>
            <person name="Liu J."/>
            <person name="Liuni S."/>
            <person name="McWilliam S."/>
            <person name="Madan Babu M."/>
            <person name="Madera M."/>
            <person name="Marchionni L."/>
            <person name="Matsuda H."/>
            <person name="Matsuzawa S."/>
            <person name="Miki H."/>
            <person name="Mignone F."/>
            <person name="Miyake S."/>
            <person name="Morris K."/>
            <person name="Mottagui-Tabar S."/>
            <person name="Mulder N."/>
            <person name="Nakano N."/>
            <person name="Nakauchi H."/>
            <person name="Ng P."/>
            <person name="Nilsson R."/>
            <person name="Nishiguchi S."/>
            <person name="Nishikawa S."/>
            <person name="Nori F."/>
            <person name="Ohara O."/>
            <person name="Okazaki Y."/>
            <person name="Orlando V."/>
            <person name="Pang K.C."/>
            <person name="Pavan W.J."/>
            <person name="Pavesi G."/>
            <person name="Pesole G."/>
            <person name="Petrovsky N."/>
            <person name="Piazza S."/>
            <person name="Reed J."/>
            <person name="Reid J.F."/>
            <person name="Ring B.Z."/>
            <person name="Ringwald M."/>
            <person name="Rost B."/>
            <person name="Ruan Y."/>
            <person name="Salzberg S.L."/>
            <person name="Sandelin A."/>
            <person name="Schneider C."/>
            <person name="Schoenbach C."/>
            <person name="Sekiguchi K."/>
            <person name="Semple C.A."/>
            <person name="Seno S."/>
            <person name="Sessa L."/>
            <person name="Sheng Y."/>
            <person name="Shibata Y."/>
            <person name="Shimada H."/>
            <person name="Shimada K."/>
            <person name="Silva D."/>
            <person name="Sinclair B."/>
            <person name="Sperling S."/>
            <person name="Stupka E."/>
            <person name="Sugiura K."/>
            <person name="Sultana R."/>
            <person name="Takenaka Y."/>
            <person name="Taki K."/>
            <person name="Tammoja K."/>
            <person name="Tan S.L."/>
            <person name="Tang S."/>
            <person name="Taylor M.S."/>
            <person name="Tegner J."/>
            <person name="Teichmann S.A."/>
            <person name="Ueda H.R."/>
            <person name="van Nimwegen E."/>
            <person name="Verardo R."/>
            <person name="Wei C.L."/>
            <person name="Yagi K."/>
            <person name="Yamanishi H."/>
            <person name="Zabarovsky E."/>
            <person name="Zhu S."/>
            <person name="Zimmer A."/>
            <person name="Hide W."/>
            <person name="Bult C."/>
            <person name="Grimmond S.M."/>
            <person name="Teasdale R.D."/>
            <person name="Liu E.T."/>
            <person name="Brusic V."/>
            <person name="Quackenbush J."/>
            <person name="Wahlestedt C."/>
            <person name="Mattick J.S."/>
            <person name="Hume D.A."/>
            <person name="Kai C."/>
            <person name="Sasaki D."/>
            <person name="Tomaru Y."/>
            <person name="Fukuda S."/>
            <person name="Kanamori-Katayama M."/>
            <person name="Suzuki M."/>
            <person name="Aoki J."/>
            <person name="Arakawa T."/>
            <person name="Iida J."/>
            <person name="Imamura K."/>
            <person name="Itoh M."/>
            <person name="Kato T."/>
            <person name="Kawaji H."/>
            <person name="Kawagashira N."/>
            <person name="Kawashima T."/>
            <person name="Kojima M."/>
            <person name="Kondo S."/>
            <person name="Konno H."/>
            <person name="Nakano K."/>
            <person name="Ninomiya N."/>
            <person name="Nishio T."/>
            <person name="Okada M."/>
            <person name="Plessy C."/>
            <person name="Shibata K."/>
            <person name="Shiraki T."/>
            <person name="Suzuki S."/>
            <person name="Tagami M."/>
            <person name="Waki K."/>
            <person name="Watahiki A."/>
            <person name="Okamura-Oho Y."/>
            <person name="Suzuki H."/>
            <person name="Kawai J."/>
            <person name="Hayashizaki Y."/>
        </authorList>
    </citation>
    <scope>NUCLEOTIDE SEQUENCE [LARGE SCALE MRNA]</scope>
    <source>
        <strain>C57BL/6J</strain>
        <strain>NOD</strain>
        <tissue>Testis</tissue>
        <tissue>Thymus</tissue>
    </source>
</reference>
<reference key="2">
    <citation type="journal article" date="2019" name="J. Biol. Chem.">
        <title>Lysine methylation by the mitochondrial methyltransferase FAM173B optimizes the function of mitochondrial ATP synthase.</title>
        <authorList>
            <person name="Malecki J.M."/>
            <person name="Willemen H.L.D.M."/>
            <person name="Pinto R."/>
            <person name="Ho A.Y.Y."/>
            <person name="Moen A."/>
            <person name="Kjoenstad I.F."/>
            <person name="Burgering B.M.T."/>
            <person name="Zwartkruis F."/>
            <person name="Eijkelkamp N."/>
            <person name="Falnes P.O."/>
        </authorList>
    </citation>
    <scope>METHYLATION AT LYS-109</scope>
</reference>
<accession>P56384</accession>
<protein>
    <recommendedName>
        <fullName evidence="5">ATP synthase F(0) complex subunit C3, mitochondrial</fullName>
    </recommendedName>
    <alternativeName>
        <fullName>ATP synthase lipid-binding protein</fullName>
    </alternativeName>
    <alternativeName>
        <fullName evidence="2">ATP synthase membrane subunit c locus 3</fullName>
    </alternativeName>
    <alternativeName>
        <fullName>ATP synthase proteolipid P3</fullName>
    </alternativeName>
    <alternativeName>
        <fullName>ATPase protein 9</fullName>
    </alternativeName>
    <alternativeName>
        <fullName>ATPase subunit c</fullName>
    </alternativeName>
</protein>
<comment type="function">
    <text>Mitochondrial membrane ATP synthase (F(1)F(0) ATP synthase or Complex V) produces ATP from ADP in the presence of a proton gradient across the membrane which is generated by electron transport complexes of the respiratory chain. F-type ATPases consist of two structural domains, F(1) - containing the extramembraneous catalytic core and F(0) - containing the membrane proton channel, linked together by a central stalk and a peripheral stalk. During catalysis, ATP synthesis in the catalytic domain of F(1) is coupled via a rotary mechanism of the central stalk subunits to proton translocation. Part of the complex F(0) domain. A homomeric c-ring of probably 10 subunits is part of the complex rotary element.</text>
</comment>
<comment type="subunit">
    <text evidence="2">F-type ATPases have 2 components, CF(1) - the catalytic core - and CF(0) - the membrane proton channel. CF(1) has five subunits: alpha(3), beta(3), gamma(1), delta(1), epsilon(1). CF(0) has three main subunits: a, b and c. Interacts with TMEM70 and TMEM242 (By similarity).</text>
</comment>
<comment type="subcellular location">
    <subcellularLocation>
        <location evidence="1">Mitochondrion membrane</location>
        <topology evidence="1">Multi-pass membrane protein</topology>
    </subcellularLocation>
</comment>
<comment type="PTM">
    <text evidence="4">Trimethylated by ATPSCKMT at Lys-109. Methylation is required for proper incorporation of the C subunit into the ATP synthase complex and mitochondrial respiration.</text>
</comment>
<comment type="disease">
    <text>This protein is the major protein stored in the storage bodies of animals or humans affected with ceroid lipofuscinosis (Batten disease).</text>
</comment>
<comment type="miscellaneous">
    <text evidence="5">There are three genes which encode the mitochondrial ATP synthase proteolipid and they specify precursors with different import sequences but identical mature proteins.</text>
</comment>
<comment type="similarity">
    <text evidence="5">Belongs to the ATPase C chain family.</text>
</comment>
<keyword id="KW-0138">CF(0)</keyword>
<keyword id="KW-0375">Hydrogen ion transport</keyword>
<keyword id="KW-0406">Ion transport</keyword>
<keyword id="KW-0446">Lipid-binding</keyword>
<keyword id="KW-0472">Membrane</keyword>
<keyword id="KW-0488">Methylation</keyword>
<keyword id="KW-0496">Mitochondrion</keyword>
<keyword id="KW-1185">Reference proteome</keyword>
<keyword id="KW-0809">Transit peptide</keyword>
<keyword id="KW-0812">Transmembrane</keyword>
<keyword id="KW-1133">Transmembrane helix</keyword>
<keyword id="KW-0813">Transport</keyword>
<gene>
    <name evidence="2" type="primary">Atp5mc3</name>
    <name type="synonym">Atp5g3</name>
</gene>